<sequence>METIKSVDIYELGSPGEKSSPWSSTILIVKLTSSNGNIGYGEAPTTFMTLPVKESMREVERVFKDQNYFNIEKNMREFYKHSFYLSRSMEATSALSAFEIASWDLIGKDLGTPVYNLLGGEYNSELRAYANGWYSDCLEPDDFVSRAKEYIKKGYTAFKFDPFRNNFDRIGNDGIKKAVDIVSAMRSELGENIDLLIECHGRFSTKYAIKVGQALDEFNPLFIEEPIHPEMELGLFDFKRYVNTPVALGERLLNKEDFARYISQGMVDIVQADLTNSKGILEAKKISAIVESFGGLMAFHNAFGPVQTAATLNVDYTLTNFLIQESFEDSWPDWKRNLFSGYRIENGHFKLSGKPGLGITADEKLMEKLIYDGMEEFNKNEPSWVVSGTYK</sequence>
<organism>
    <name type="scientific">Picrophilus torridus (strain ATCC 700027 / DSM 9790 / JCM 10055 / NBRC 100828 / KAW 2/3)</name>
    <dbReference type="NCBI Taxonomy" id="1122961"/>
    <lineage>
        <taxon>Archaea</taxon>
        <taxon>Methanobacteriati</taxon>
        <taxon>Thermoplasmatota</taxon>
        <taxon>Thermoplasmata</taxon>
        <taxon>Thermoplasmatales</taxon>
        <taxon>Picrophilaceae</taxon>
        <taxon>Picrophilus</taxon>
    </lineage>
</organism>
<name>GAD_PICTO</name>
<protein>
    <recommendedName>
        <fullName evidence="3">D-gluconate/D-galactonate dehydratase</fullName>
        <shortName evidence="3">GAD</shortName>
        <shortName evidence="3">GNAD</shortName>
        <ecNumber evidence="2">4.2.1.140</ecNumber>
        <ecNumber evidence="2">4.2.1.39</ecNumber>
        <ecNumber evidence="2">4.2.1.6</ecNumber>
    </recommendedName>
</protein>
<evidence type="ECO:0000250" key="1"/>
<evidence type="ECO:0000269" key="2">
    <source>
    </source>
</evidence>
<evidence type="ECO:0000303" key="3">
    <source>
    </source>
</evidence>
<evidence type="ECO:0000305" key="4"/>
<proteinExistence type="evidence at protein level"/>
<dbReference type="EC" id="4.2.1.140" evidence="2"/>
<dbReference type="EC" id="4.2.1.39" evidence="2"/>
<dbReference type="EC" id="4.2.1.6" evidence="2"/>
<dbReference type="EMBL" id="AE017261">
    <property type="protein sequence ID" value="AAT43070.1"/>
    <property type="molecule type" value="Genomic_DNA"/>
</dbReference>
<dbReference type="RefSeq" id="WP_011177286.1">
    <property type="nucleotide sequence ID" value="NC_005877.1"/>
</dbReference>
<dbReference type="SMR" id="Q6L1T2"/>
<dbReference type="FunCoup" id="Q6L1T2">
    <property type="interactions" value="90"/>
</dbReference>
<dbReference type="STRING" id="263820.PTO0485"/>
<dbReference type="PaxDb" id="263820-PTO0485"/>
<dbReference type="GeneID" id="2844873"/>
<dbReference type="KEGG" id="pto:PTO0485"/>
<dbReference type="PATRIC" id="fig|263820.9.peg.511"/>
<dbReference type="eggNOG" id="arCOG01168">
    <property type="taxonomic scope" value="Archaea"/>
</dbReference>
<dbReference type="HOGENOM" id="CLU_030273_3_2_2"/>
<dbReference type="InParanoid" id="Q6L1T2"/>
<dbReference type="OrthoDB" id="42605at2157"/>
<dbReference type="BRENDA" id="4.2.1.140">
    <property type="organism ID" value="7518"/>
</dbReference>
<dbReference type="BRENDA" id="4.2.1.39">
    <property type="organism ID" value="7518"/>
</dbReference>
<dbReference type="UniPathway" id="UPA00792"/>
<dbReference type="Proteomes" id="UP000000438">
    <property type="component" value="Chromosome"/>
</dbReference>
<dbReference type="GO" id="GO:0008869">
    <property type="term" value="F:galactonate dehydratase activity"/>
    <property type="evidence" value="ECO:0000314"/>
    <property type="project" value="UniProtKB"/>
</dbReference>
<dbReference type="GO" id="GO:0047929">
    <property type="term" value="F:gluconate dehydratase activity"/>
    <property type="evidence" value="ECO:0000314"/>
    <property type="project" value="UniProtKB"/>
</dbReference>
<dbReference type="GO" id="GO:0046872">
    <property type="term" value="F:metal ion binding"/>
    <property type="evidence" value="ECO:0007669"/>
    <property type="project" value="UniProtKB-KW"/>
</dbReference>
<dbReference type="CDD" id="cd03316">
    <property type="entry name" value="MR_like"/>
    <property type="match status" value="1"/>
</dbReference>
<dbReference type="FunFam" id="3.20.20.120:FF:000005">
    <property type="entry name" value="Putative L-rhamnonate dehydratase"/>
    <property type="match status" value="1"/>
</dbReference>
<dbReference type="Gene3D" id="3.20.20.120">
    <property type="entry name" value="Enolase-like C-terminal domain"/>
    <property type="match status" value="1"/>
</dbReference>
<dbReference type="Gene3D" id="3.30.390.10">
    <property type="entry name" value="Enolase-like, N-terminal domain"/>
    <property type="match status" value="1"/>
</dbReference>
<dbReference type="InterPro" id="IPR034593">
    <property type="entry name" value="DgoD-like"/>
</dbReference>
<dbReference type="InterPro" id="IPR036849">
    <property type="entry name" value="Enolase-like_C_sf"/>
</dbReference>
<dbReference type="InterPro" id="IPR029017">
    <property type="entry name" value="Enolase-like_N"/>
</dbReference>
<dbReference type="InterPro" id="IPR029065">
    <property type="entry name" value="Enolase_C-like"/>
</dbReference>
<dbReference type="InterPro" id="IPR013342">
    <property type="entry name" value="Mandelate_racemase_C"/>
</dbReference>
<dbReference type="InterPro" id="IPR013341">
    <property type="entry name" value="Mandelate_racemase_N_dom"/>
</dbReference>
<dbReference type="PANTHER" id="PTHR48080:SF2">
    <property type="entry name" value="D-GALACTONATE DEHYDRATASE"/>
    <property type="match status" value="1"/>
</dbReference>
<dbReference type="PANTHER" id="PTHR48080">
    <property type="entry name" value="D-GALACTONATE DEHYDRATASE-RELATED"/>
    <property type="match status" value="1"/>
</dbReference>
<dbReference type="Pfam" id="PF13378">
    <property type="entry name" value="MR_MLE_C"/>
    <property type="match status" value="1"/>
</dbReference>
<dbReference type="Pfam" id="PF02746">
    <property type="entry name" value="MR_MLE_N"/>
    <property type="match status" value="1"/>
</dbReference>
<dbReference type="SFLD" id="SFLDS00001">
    <property type="entry name" value="Enolase"/>
    <property type="match status" value="1"/>
</dbReference>
<dbReference type="SFLD" id="SFLDG00179">
    <property type="entry name" value="mandelate_racemase"/>
    <property type="match status" value="1"/>
</dbReference>
<dbReference type="SMART" id="SM00922">
    <property type="entry name" value="MR_MLE"/>
    <property type="match status" value="1"/>
</dbReference>
<dbReference type="SUPFAM" id="SSF51604">
    <property type="entry name" value="Enolase C-terminal domain-like"/>
    <property type="match status" value="1"/>
</dbReference>
<dbReference type="SUPFAM" id="SSF54826">
    <property type="entry name" value="Enolase N-terminal domain-like"/>
    <property type="match status" value="1"/>
</dbReference>
<comment type="function">
    <text evidence="2">Involved in the degradation of glucose and galactose via the nonphosphorylative variant of Entner-Doudoroff pathway. Catalyzes the dehydration of gluconate to produce 2-keto-3-deoxygluconate (KDG). It is also able to catalyze the dehydration of galactonate to produce 2-keto-3-deoxygalactonate (KDGal).</text>
</comment>
<comment type="catalytic activity">
    <reaction evidence="2">
        <text>D-gluconate = 2-dehydro-3-deoxy-D-gluconate + H2O</text>
        <dbReference type="Rhea" id="RHEA:21612"/>
        <dbReference type="ChEBI" id="CHEBI:15377"/>
        <dbReference type="ChEBI" id="CHEBI:18391"/>
        <dbReference type="ChEBI" id="CHEBI:57990"/>
        <dbReference type="EC" id="4.2.1.140"/>
    </reaction>
</comment>
<comment type="catalytic activity">
    <reaction evidence="2">
        <text>D-gluconate = 2-dehydro-3-deoxy-D-gluconate + H2O</text>
        <dbReference type="Rhea" id="RHEA:21612"/>
        <dbReference type="ChEBI" id="CHEBI:15377"/>
        <dbReference type="ChEBI" id="CHEBI:18391"/>
        <dbReference type="ChEBI" id="CHEBI:57990"/>
        <dbReference type="EC" id="4.2.1.39"/>
    </reaction>
</comment>
<comment type="catalytic activity">
    <reaction evidence="2">
        <text>D-galactonate = 2-dehydro-3-deoxy-D-galactonate + H2O</text>
        <dbReference type="Rhea" id="RHEA:18649"/>
        <dbReference type="ChEBI" id="CHEBI:12931"/>
        <dbReference type="ChEBI" id="CHEBI:15377"/>
        <dbReference type="ChEBI" id="CHEBI:57989"/>
        <dbReference type="EC" id="4.2.1.140"/>
    </reaction>
</comment>
<comment type="catalytic activity">
    <reaction evidence="2">
        <text>D-galactonate = 2-dehydro-3-deoxy-D-galactonate + H2O</text>
        <dbReference type="Rhea" id="RHEA:18649"/>
        <dbReference type="ChEBI" id="CHEBI:12931"/>
        <dbReference type="ChEBI" id="CHEBI:15377"/>
        <dbReference type="ChEBI" id="CHEBI:57989"/>
        <dbReference type="EC" id="4.2.1.6"/>
    </reaction>
</comment>
<comment type="cofactor">
    <cofactor evidence="2">
        <name>Mg(2+)</name>
        <dbReference type="ChEBI" id="CHEBI:18420"/>
    </cofactor>
    <text evidence="2">Binds 1 Mg(2+) ion per subunit.</text>
</comment>
<comment type="biophysicochemical properties">
    <kinetics>
        <KM evidence="2">2 mM for galactonate (at 60 degrees Celsius and pH 6.2)</KM>
        <KM evidence="2">2.5 mM for gluconate (at 60 degrees Celsius and pH 6.2)</KM>
        <Vmax evidence="2">15.0 umol/min/mg enzyme with gluconate as substrate (at 60 degrees Celsius and pH 6.2)</Vmax>
        <Vmax evidence="2">1.0 umol/min/mg enzyme with galactonate as substrate (at 60 degrees Celsius and pH 6.2)</Vmax>
    </kinetics>
    <phDependence>
        <text evidence="2">Optimum pH is between 6.</text>
    </phDependence>
    <temperatureDependence>
        <text evidence="2">Optimum temperature is 70 degrees Celsius.</text>
    </temperatureDependence>
</comment>
<comment type="pathway">
    <text evidence="4">Carbohydrate acid metabolism; D-gluconate degradation.</text>
</comment>
<comment type="subunit">
    <text evidence="2">Homooctamer.</text>
</comment>
<comment type="induction">
    <text evidence="2">Constitutively expressed.</text>
</comment>
<comment type="similarity">
    <text evidence="4">Belongs to the mandelate racemase/muconate lactonizing enzyme family. GaD subfamily.</text>
</comment>
<gene>
    <name evidence="3" type="primary">gad</name>
    <name type="ordered locus">PTO0485</name>
</gene>
<reference key="1">
    <citation type="journal article" date="2004" name="Proc. Natl. Acad. Sci. U.S.A.">
        <title>Genome sequence of Picrophilus torridus and its implications for life around pH 0.</title>
        <authorList>
            <person name="Fuetterer O."/>
            <person name="Angelov A."/>
            <person name="Liesegang H."/>
            <person name="Gottschalk G."/>
            <person name="Schleper C."/>
            <person name="Schepers B."/>
            <person name="Dock C."/>
            <person name="Antranikian G."/>
            <person name="Liebl W."/>
        </authorList>
    </citation>
    <scope>NUCLEOTIDE SEQUENCE [LARGE SCALE GENOMIC DNA]</scope>
    <source>
        <strain>ATCC 700027 / DSM 9790 / JCM 10055 / NBRC 100828 / KAW 2/3</strain>
    </source>
</reference>
<reference key="2">
    <citation type="journal article" date="2010" name="J. Bacteriol.">
        <title>The nonphosphorylative Entner-Doudoroff pathway in the thermoacidophilic euryarchaeon Picrophilus torridus involves a novel 2-keto-3-deoxygluconate-specific aldolase.</title>
        <authorList>
            <person name="Reher M."/>
            <person name="Fuhrer T."/>
            <person name="Bott M."/>
            <person name="Schonheit P."/>
        </authorList>
    </citation>
    <scope>FUNCTION</scope>
    <scope>CATALYTIC ACTIVITY</scope>
    <scope>BIOPHYSICOCHEMICAL PROPERTIES</scope>
    <scope>COFACTOR</scope>
    <scope>INDUCTION</scope>
    <scope>SUBUNIT</scope>
</reference>
<feature type="chain" id="PRO_0000422651" description="D-gluconate/D-galactonate dehydratase">
    <location>
        <begin position="1"/>
        <end position="391"/>
    </location>
</feature>
<feature type="active site" description="Proton donor" evidence="1">
    <location>
        <position position="200"/>
    </location>
</feature>
<feature type="active site" description="Proton acceptor" evidence="1">
    <location>
        <position position="300"/>
    </location>
</feature>
<feature type="binding site" evidence="1">
    <location>
        <position position="198"/>
    </location>
    <ligand>
        <name>Mg(2+)</name>
        <dbReference type="ChEBI" id="CHEBI:18420"/>
    </ligand>
</feature>
<feature type="binding site" evidence="1">
    <location>
        <position position="224"/>
    </location>
    <ligand>
        <name>Mg(2+)</name>
        <dbReference type="ChEBI" id="CHEBI:18420"/>
    </ligand>
</feature>
<feature type="binding site" evidence="1">
    <location>
        <position position="250"/>
    </location>
    <ligand>
        <name>Mg(2+)</name>
        <dbReference type="ChEBI" id="CHEBI:18420"/>
    </ligand>
</feature>
<feature type="site" description="Increases basicity of active site His" evidence="1">
    <location>
        <position position="273"/>
    </location>
</feature>
<feature type="site" description="Transition state stabilizer" evidence="1">
    <location>
        <position position="325"/>
    </location>
</feature>
<accession>Q6L1T2</accession>
<keyword id="KW-0119">Carbohydrate metabolism</keyword>
<keyword id="KW-0456">Lyase</keyword>
<keyword id="KW-0460">Magnesium</keyword>
<keyword id="KW-0479">Metal-binding</keyword>